<comment type="function">
    <text evidence="2">Involved in pre-mRNA splicing.</text>
</comment>
<comment type="subunit">
    <text evidence="5">May be a component of the spliceosome.</text>
</comment>
<comment type="subcellular location">
    <subcellularLocation>
        <location evidence="2">Nucleus</location>
    </subcellularLocation>
</comment>
<comment type="tissue specificity">
    <text evidence="2">Detected in intestine, pharynx, vulval muscles and body wall muscles.</text>
</comment>
<comment type="disruption phenotype">
    <text evidence="2">Developmental arrest at larval stage L1 or L2. RNAi-mediated knockdown results in aberrant splicing of tos-1 mRNA with increased intron 1 retention and exon 3 skipping, leading to increased expression levels of tos-1 isoforms 1 and 2. However there is no obvious recognition of the cryptic 3' splice site in tos-1 intron 1.</text>
</comment>
<comment type="similarity">
    <text evidence="4">Belongs to the MFAP1 family.</text>
</comment>
<reference evidence="6" key="1">
    <citation type="journal article" date="1998" name="Science">
        <title>Genome sequence of the nematode C. elegans: a platform for investigating biology.</title>
        <authorList>
            <consortium name="The C. elegans sequencing consortium"/>
        </authorList>
    </citation>
    <scope>NUCLEOTIDE SEQUENCE [LARGE SCALE GENOMIC DNA]</scope>
    <source>
        <strain evidence="6">Bristol N2</strain>
    </source>
</reference>
<reference evidence="4" key="2">
    <citation type="journal article" date="2012" name="PLoS Genet.">
        <title>The Caenorhabditis elegans gene mfap-1 encodes a nuclear protein that affects alternative splicing.</title>
        <authorList>
            <person name="Ma L."/>
            <person name="Gao X."/>
            <person name="Luo J."/>
            <person name="Huang L."/>
            <person name="Teng Y."/>
            <person name="Horvitz H.R."/>
        </authorList>
    </citation>
    <scope>FUNCTION</scope>
    <scope>SUBUNIT</scope>
    <scope>SUBCELLULAR LOCATION</scope>
    <scope>TISSUE SPECIFICITY</scope>
    <scope>DISRUPTION PHENOTYPE</scope>
    <scope>MUTAGENESIS OF 426-ASP-THR-427 AND ASP-426</scope>
</reference>
<organism evidence="6">
    <name type="scientific">Caenorhabditis elegans</name>
    <dbReference type="NCBI Taxonomy" id="6239"/>
    <lineage>
        <taxon>Eukaryota</taxon>
        <taxon>Metazoa</taxon>
        <taxon>Ecdysozoa</taxon>
        <taxon>Nematoda</taxon>
        <taxon>Chromadorea</taxon>
        <taxon>Rhabditida</taxon>
        <taxon>Rhabditina</taxon>
        <taxon>Rhabditomorpha</taxon>
        <taxon>Rhabditoidea</taxon>
        <taxon>Rhabditidae</taxon>
        <taxon>Peloderinae</taxon>
        <taxon>Caenorhabditis</taxon>
    </lineage>
</organism>
<gene>
    <name evidence="3" type="primary">mfap-1</name>
    <name evidence="7" type="ORF">F43G9.10</name>
</gene>
<feature type="chain" id="PRO_0000438775" description="Microfibrillar-associated protein 1">
    <location>
        <begin position="1"/>
        <end position="466"/>
    </location>
</feature>
<feature type="region of interest" description="Disordered" evidence="1">
    <location>
        <begin position="1"/>
        <end position="245"/>
    </location>
</feature>
<feature type="region of interest" description="Disordered" evidence="1">
    <location>
        <begin position="251"/>
        <end position="270"/>
    </location>
</feature>
<feature type="region of interest" description="Disordered" evidence="1">
    <location>
        <begin position="422"/>
        <end position="466"/>
    </location>
</feature>
<feature type="compositionally biased region" description="Basic and acidic residues" evidence="1">
    <location>
        <begin position="58"/>
        <end position="77"/>
    </location>
</feature>
<feature type="compositionally biased region" description="Basic and acidic residues" evidence="1">
    <location>
        <begin position="97"/>
        <end position="117"/>
    </location>
</feature>
<feature type="compositionally biased region" description="Acidic residues" evidence="1">
    <location>
        <begin position="118"/>
        <end position="132"/>
    </location>
</feature>
<feature type="compositionally biased region" description="Basic and acidic residues" evidence="1">
    <location>
        <begin position="133"/>
        <end position="155"/>
    </location>
</feature>
<feature type="compositionally biased region" description="Acidic residues" evidence="1">
    <location>
        <begin position="156"/>
        <end position="168"/>
    </location>
</feature>
<feature type="compositionally biased region" description="Basic and acidic residues" evidence="1">
    <location>
        <begin position="169"/>
        <end position="192"/>
    </location>
</feature>
<feature type="compositionally biased region" description="Acidic residues" evidence="1">
    <location>
        <begin position="193"/>
        <end position="219"/>
    </location>
</feature>
<feature type="compositionally biased region" description="Basic and acidic residues" evidence="1">
    <location>
        <begin position="234"/>
        <end position="245"/>
    </location>
</feature>
<feature type="compositionally biased region" description="Polar residues" evidence="1">
    <location>
        <begin position="434"/>
        <end position="446"/>
    </location>
</feature>
<feature type="mutagenesis site" description="In n4564 n5214; temperature sensitive phenotype with embryonic lethality at 25 degrees Celsius and wild type phenotype at 15 degrees Celsius. Splicing of tos-1 mRNA is defective with increased intron 1 retention and exon 3 skipping, although there is no obvious recognition of the cryptic 3' splice site in tos-1 intron 1." evidence="2">
    <original>DT</original>
    <variation>VA</variation>
    <location>
        <begin position="426"/>
        <end position="427"/>
    </location>
</feature>
<feature type="mutagenesis site" description="In n5214; no effect on tos-1 mRNA splicing." evidence="2">
    <original>D</original>
    <variation>V</variation>
    <location>
        <position position="426"/>
    </location>
</feature>
<dbReference type="EMBL" id="BX284601">
    <property type="protein sequence ID" value="CAB02103.1"/>
    <property type="molecule type" value="Genomic_DNA"/>
</dbReference>
<dbReference type="PIR" id="T22141">
    <property type="entry name" value="T22141"/>
</dbReference>
<dbReference type="RefSeq" id="NP_492340.1">
    <property type="nucleotide sequence ID" value="NM_059939.9"/>
</dbReference>
<dbReference type="SMR" id="Q93712"/>
<dbReference type="FunCoup" id="Q93712">
    <property type="interactions" value="2703"/>
</dbReference>
<dbReference type="STRING" id="6239.F43G9.10.1"/>
<dbReference type="PaxDb" id="6239-F43G9.10"/>
<dbReference type="PeptideAtlas" id="Q93712"/>
<dbReference type="EnsemblMetazoa" id="F43G9.10.1">
    <property type="protein sequence ID" value="F43G9.10.1"/>
    <property type="gene ID" value="WBGene00009671"/>
</dbReference>
<dbReference type="GeneID" id="172661"/>
<dbReference type="KEGG" id="cel:CELE_F43G9.10"/>
<dbReference type="UCSC" id="F43G9.10">
    <property type="organism name" value="c. elegans"/>
</dbReference>
<dbReference type="AGR" id="WB:WBGene00009671"/>
<dbReference type="CTD" id="172661"/>
<dbReference type="WormBase" id="F43G9.10">
    <property type="protein sequence ID" value="CE10372"/>
    <property type="gene ID" value="WBGene00009671"/>
    <property type="gene designation" value="mfap-1"/>
</dbReference>
<dbReference type="eggNOG" id="KOG1425">
    <property type="taxonomic scope" value="Eukaryota"/>
</dbReference>
<dbReference type="HOGENOM" id="CLU_023077_1_0_1"/>
<dbReference type="InParanoid" id="Q93712"/>
<dbReference type="OMA" id="FHNERAG"/>
<dbReference type="OrthoDB" id="1111734at2759"/>
<dbReference type="PhylomeDB" id="Q93712"/>
<dbReference type="PRO" id="PR:Q93712"/>
<dbReference type="Proteomes" id="UP000001940">
    <property type="component" value="Chromosome I"/>
</dbReference>
<dbReference type="Bgee" id="WBGene00009671">
    <property type="expression patterns" value="Expressed in adult organism and 4 other cell types or tissues"/>
</dbReference>
<dbReference type="GO" id="GO:0005634">
    <property type="term" value="C:nucleus"/>
    <property type="evidence" value="ECO:0000314"/>
    <property type="project" value="WormBase"/>
</dbReference>
<dbReference type="GO" id="GO:0005684">
    <property type="term" value="C:U2-type spliceosomal complex"/>
    <property type="evidence" value="ECO:0000318"/>
    <property type="project" value="GO_Central"/>
</dbReference>
<dbReference type="GO" id="GO:0000398">
    <property type="term" value="P:mRNA splicing, via spliceosome"/>
    <property type="evidence" value="ECO:0000318"/>
    <property type="project" value="GO_Central"/>
</dbReference>
<dbReference type="GO" id="GO:0000381">
    <property type="term" value="P:regulation of alternative mRNA splicing, via spliceosome"/>
    <property type="evidence" value="ECO:0000315"/>
    <property type="project" value="WormBase"/>
</dbReference>
<dbReference type="InterPro" id="IPR033194">
    <property type="entry name" value="MFAP1"/>
</dbReference>
<dbReference type="InterPro" id="IPR009730">
    <property type="entry name" value="MFAP1_C"/>
</dbReference>
<dbReference type="PANTHER" id="PTHR15327">
    <property type="entry name" value="MICROFIBRIL-ASSOCIATED PROTEIN"/>
    <property type="match status" value="1"/>
</dbReference>
<dbReference type="Pfam" id="PF06991">
    <property type="entry name" value="MFAP1"/>
    <property type="match status" value="1"/>
</dbReference>
<accession>Q93712</accession>
<name>MFAP1_CAEEL</name>
<protein>
    <recommendedName>
        <fullName evidence="3">Microfibrillar-associated protein 1</fullName>
    </recommendedName>
</protein>
<keyword id="KW-0507">mRNA processing</keyword>
<keyword id="KW-0508">mRNA splicing</keyword>
<keyword id="KW-0539">Nucleus</keyword>
<keyword id="KW-1185">Reference proteome</keyword>
<keyword id="KW-0747">Spliceosome</keyword>
<sequence>MGDYVPGFEQRESDNRSFGHSRLPTLGAIPIKNEKGQTVMQKVKVSRYVAGKAPEYARNYDSDSSESDRETDRDDDRRRRRRRESSDEEDRRRHRRHEDYGRRRQVEKPEVLGKVEDESSENEQESEEDEEKQEERRERARMRRLELHENNREKDEEQEDSAESDEEDFERRRQMLRDRAIKREEEIKREIKEELEEDDVEEEEEEESSEEEDSDEDDDPVPRLKPIFTRKKDRITLQEAEKEKEKEILKKIEDEKRAEERKRESAKLVEKVLQEEEAAEKRKTEDRVDLSSVLTDDETENMAYEAWKLREMKRLKRNRDEREEAAREKAELDKIHAMSEEERLKYLRLNPKVITNKQDKGKYKFLQKYFHRGAFFLDEEDEVLKRNFAEATNDDQFDKTILPKVMQVKNFGKASRTKYTHLTEEDTTDHQGVWASTNQLNSQFSTKRAGGSRPVFERPATKKRKN</sequence>
<proteinExistence type="evidence at protein level"/>
<evidence type="ECO:0000256" key="1">
    <source>
        <dbReference type="SAM" id="MobiDB-lite"/>
    </source>
</evidence>
<evidence type="ECO:0000269" key="2">
    <source>
    </source>
</evidence>
<evidence type="ECO:0000303" key="3">
    <source>
    </source>
</evidence>
<evidence type="ECO:0000305" key="4"/>
<evidence type="ECO:0000305" key="5">
    <source>
    </source>
</evidence>
<evidence type="ECO:0000312" key="6">
    <source>
        <dbReference type="Proteomes" id="UP000001940"/>
    </source>
</evidence>
<evidence type="ECO:0000312" key="7">
    <source>
        <dbReference type="WormBase" id="F43G9.10"/>
    </source>
</evidence>